<organismHost>
    <name type="scientific">Arabidopsis thaliana</name>
    <name type="common">Mouse-ear cress</name>
    <dbReference type="NCBI Taxonomy" id="3702"/>
</organismHost>
<organismHost>
    <name type="scientific">Brassica</name>
    <dbReference type="NCBI Taxonomy" id="3705"/>
</organismHost>
<organismHost>
    <name type="scientific">Raphanus</name>
    <dbReference type="NCBI Taxonomy" id="3725"/>
</organismHost>
<keyword id="KW-0064">Aspartyl protease</keyword>
<keyword id="KW-0255">Endonuclease</keyword>
<keyword id="KW-0378">Hydrolase</keyword>
<keyword id="KW-0540">Nuclease</keyword>
<keyword id="KW-0548">Nucleotidyltransferase</keyword>
<keyword id="KW-0645">Protease</keyword>
<keyword id="KW-1185">Reference proteome</keyword>
<keyword id="KW-0695">RNA-directed DNA polymerase</keyword>
<keyword id="KW-0808">Transferase</keyword>
<organism>
    <name type="scientific">Cauliflower mosaic virus (strain Strasbourg)</name>
    <name type="common">CaMV</name>
    <dbReference type="NCBI Taxonomy" id="10648"/>
    <lineage>
        <taxon>Viruses</taxon>
        <taxon>Riboviria</taxon>
        <taxon>Pararnavirae</taxon>
        <taxon>Artverviricota</taxon>
        <taxon>Revtraviricetes</taxon>
        <taxon>Ortervirales</taxon>
        <taxon>Caulimoviridae</taxon>
        <taxon>Caulimovirus</taxon>
        <taxon>Caulimovirus tessellobrassicae</taxon>
    </lineage>
</organism>
<evidence type="ECO:0000250" key="1"/>
<evidence type="ECO:0000255" key="2">
    <source>
        <dbReference type="PROSITE-ProRule" id="PRU00405"/>
    </source>
</evidence>
<evidence type="ECO:0000305" key="3"/>
<name>POL_CAMVS</name>
<proteinExistence type="inferred from homology"/>
<gene>
    <name type="ORF">ORF V</name>
</gene>
<protein>
    <recommendedName>
        <fullName>Enzymatic polyprotein</fullName>
    </recommendedName>
    <domain>
        <recommendedName>
            <fullName>Aspartic protease</fullName>
            <ecNumber>3.4.23.-</ecNumber>
        </recommendedName>
    </domain>
    <domain>
        <recommendedName>
            <fullName>Endonuclease</fullName>
        </recommendedName>
    </domain>
    <domain>
        <recommendedName>
            <fullName>Reverse transcriptase</fullName>
            <ecNumber>2.7.7.49</ecNumber>
        </recommendedName>
    </domain>
</protein>
<reference key="1">
    <citation type="journal article" date="1980" name="Cell">
        <title>Nucleotide sequence of cauliflower mosaic virus DNA.</title>
        <authorList>
            <person name="Franck A."/>
            <person name="Guilley H."/>
            <person name="Jonard G."/>
            <person name="Richards K."/>
            <person name="Hirth L."/>
        </authorList>
    </citation>
    <scope>NUCLEOTIDE SEQUENCE [GENOMIC DNA]</scope>
</reference>
<accession>P03554</accession>
<dbReference type="EC" id="3.4.23.-"/>
<dbReference type="EC" id="2.7.7.49"/>
<dbReference type="EMBL" id="V00141">
    <property type="protein sequence ID" value="CAA23460.1"/>
    <property type="molecule type" value="Genomic_DNA"/>
</dbReference>
<dbReference type="PIR" id="D90799">
    <property type="entry name" value="QQCV5"/>
</dbReference>
<dbReference type="RefSeq" id="NP_056728.1">
    <property type="nucleotide sequence ID" value="NC_001497.1"/>
</dbReference>
<dbReference type="SMR" id="P03554"/>
<dbReference type="MEROPS" id="A03.001"/>
<dbReference type="KEGG" id="vg:1489542"/>
<dbReference type="Proteomes" id="UP000002501">
    <property type="component" value="Genome"/>
</dbReference>
<dbReference type="GO" id="GO:0004190">
    <property type="term" value="F:aspartic-type endopeptidase activity"/>
    <property type="evidence" value="ECO:0007669"/>
    <property type="project" value="UniProtKB-KW"/>
</dbReference>
<dbReference type="GO" id="GO:0004519">
    <property type="term" value="F:endonuclease activity"/>
    <property type="evidence" value="ECO:0007669"/>
    <property type="project" value="UniProtKB-KW"/>
</dbReference>
<dbReference type="GO" id="GO:0003964">
    <property type="term" value="F:RNA-directed DNA polymerase activity"/>
    <property type="evidence" value="ECO:0007669"/>
    <property type="project" value="UniProtKB-KW"/>
</dbReference>
<dbReference type="GO" id="GO:0006508">
    <property type="term" value="P:proteolysis"/>
    <property type="evidence" value="ECO:0007669"/>
    <property type="project" value="UniProtKB-KW"/>
</dbReference>
<dbReference type="CDD" id="cd00303">
    <property type="entry name" value="retropepsin_like"/>
    <property type="match status" value="1"/>
</dbReference>
<dbReference type="CDD" id="cd09274">
    <property type="entry name" value="RNase_HI_RT_Ty3"/>
    <property type="match status" value="1"/>
</dbReference>
<dbReference type="CDD" id="cd01647">
    <property type="entry name" value="RT_LTR"/>
    <property type="match status" value="1"/>
</dbReference>
<dbReference type="Gene3D" id="3.30.70.270">
    <property type="match status" value="2"/>
</dbReference>
<dbReference type="Gene3D" id="2.40.70.10">
    <property type="entry name" value="Acid Proteases"/>
    <property type="match status" value="1"/>
</dbReference>
<dbReference type="Gene3D" id="3.10.10.10">
    <property type="entry name" value="HIV Type 1 Reverse Transcriptase, subunit A, domain 1"/>
    <property type="match status" value="1"/>
</dbReference>
<dbReference type="InterPro" id="IPR043502">
    <property type="entry name" value="DNA/RNA_pol_sf"/>
</dbReference>
<dbReference type="InterPro" id="IPR000588">
    <property type="entry name" value="Pept_A3A"/>
</dbReference>
<dbReference type="InterPro" id="IPR021109">
    <property type="entry name" value="Peptidase_aspartic_dom_sf"/>
</dbReference>
<dbReference type="InterPro" id="IPR043128">
    <property type="entry name" value="Rev_trsase/Diguanyl_cyclase"/>
</dbReference>
<dbReference type="InterPro" id="IPR000477">
    <property type="entry name" value="RT_dom"/>
</dbReference>
<dbReference type="InterPro" id="IPR041373">
    <property type="entry name" value="RT_RNaseH"/>
</dbReference>
<dbReference type="InterPro" id="IPR051320">
    <property type="entry name" value="Viral_Replic_Matur_Polypro"/>
</dbReference>
<dbReference type="PANTHER" id="PTHR33064">
    <property type="entry name" value="POL PROTEIN"/>
    <property type="match status" value="1"/>
</dbReference>
<dbReference type="PANTHER" id="PTHR33064:SF37">
    <property type="entry name" value="RIBONUCLEASE H"/>
    <property type="match status" value="1"/>
</dbReference>
<dbReference type="Pfam" id="PF02160">
    <property type="entry name" value="Peptidase_A3"/>
    <property type="match status" value="1"/>
</dbReference>
<dbReference type="Pfam" id="PF17917">
    <property type="entry name" value="RT_RNaseH"/>
    <property type="match status" value="1"/>
</dbReference>
<dbReference type="Pfam" id="PF00078">
    <property type="entry name" value="RVT_1"/>
    <property type="match status" value="1"/>
</dbReference>
<dbReference type="PRINTS" id="PR00731">
    <property type="entry name" value="CAULIMOPTASE"/>
</dbReference>
<dbReference type="SUPFAM" id="SSF56672">
    <property type="entry name" value="DNA/RNA polymerases"/>
    <property type="match status" value="1"/>
</dbReference>
<dbReference type="PROSITE" id="PS50878">
    <property type="entry name" value="RT_POL"/>
    <property type="match status" value="1"/>
</dbReference>
<feature type="chain" id="PRO_0000222054" description="Enzymatic polyprotein">
    <location>
        <begin position="1"/>
        <end position="679"/>
    </location>
</feature>
<feature type="domain" description="Reverse transcriptase" evidence="2">
    <location>
        <begin position="272"/>
        <end position="452"/>
    </location>
</feature>
<feature type="region of interest" description="Protease" evidence="1">
    <location>
        <begin position="40"/>
        <end position="130"/>
    </location>
</feature>
<feature type="active site">
    <location>
        <position position="45"/>
    </location>
</feature>
<sequence>MDHLLLKTQTQTEQVMNVTNPNSIYIKGRLYFKGYKKIELHCFVDTGASLCIASKFVIPEEHWVNAERPIMVKIADGSSITISKVCKDIDLIIAGEIFRIPTVYQQESGIDFIIGNNFCQLYEPFIQFTDRVIFTKNKSYPVHIAKLTRAVRVGTEGFLESMKKRSKTQQPEPVNISTNKIENPLEEIAILSEGRRLSEEKLFITQQRMQKIEELLEKVCSENPLDPNKTKQWMKASIKLSDPSKAIKVKPMKYSPMDREEFDKQIKELLDLKVIKPSKSPHMAPAFLVNNEAEKRRGKKRMVVNYKAMNKATVGDAYNLPNKDELLTLIRGKKIFSSFDCKSGFWQVLLDQESRPLTAFTCPQGHYEWNVVPFGLKQAPSIFQRHMDEAFRVFRKFCCVYVDDILVFSNNEEDHLLHVAMILQKCNQHGIILSKKKAQLFKKKINFLGLEIDEGTHKPQGHILEHINKFPDTLEDKKQLQRFLGILTYASDYIPKLAQIRKPLQAKLKENVPWRWTKEDTLYMQKVKKNLQGFPPLHHPLPEEKLIIETDASDDYWGGMLKAIKINEGTNTELICRYASGSFKAAEKNYHSNDKETLAVINTIKKFSIYLTPVHFLIRTDNTHFKSFVNLNYKGDSKLGRNIRWQAWLSHYSFDVEHIKGTDNHFADFLSREFNKVNS</sequence>
<comment type="function">
    <text evidence="1">Encodes for at least two polypeptides: protease (PR) and reverse transcriptase (RT). The protease processes the polyprotein in cis. Reverse transcriptase is multifunctional enzyme that converts the viral RNA genome into dsDNA in viral cytoplasmic capsids. This enzyme displays a DNA polymerase activity that can copy either DNA or RNA templates, and a ribonuclease H (RNase H) activity that cleaves the RNA strand of RNA-DNA heteroduplexes in a partially processive 3'- to 5'-endonucleasic mode. Neo-synthesized pregenomic RNA (pgRNA) are encapsidated, and reverse-transcribed inside the nucleocapsid. Partial (+)DNA is synthesized from the (-)DNA template and generates the relaxed circular DNA (RC-DNA) genome. After budding and infection, the RC-DNA migrates in the nucleus, and is converted into a plasmid-like covalently closed circular DNA (cccDNA) (By similarity).</text>
</comment>
<comment type="catalytic activity">
    <reaction evidence="2">
        <text>DNA(n) + a 2'-deoxyribonucleoside 5'-triphosphate = DNA(n+1) + diphosphate</text>
        <dbReference type="Rhea" id="RHEA:22508"/>
        <dbReference type="Rhea" id="RHEA-COMP:17339"/>
        <dbReference type="Rhea" id="RHEA-COMP:17340"/>
        <dbReference type="ChEBI" id="CHEBI:33019"/>
        <dbReference type="ChEBI" id="CHEBI:61560"/>
        <dbReference type="ChEBI" id="CHEBI:173112"/>
        <dbReference type="EC" id="2.7.7.49"/>
    </reaction>
</comment>
<comment type="domain">
    <text evidence="1">The polymerase/reverse transcriptase (RT) and ribonuclease H (RH) domains are structured in five subdomains: finger, palm, thumb, connection and RNase H. Within the palm subdomain, the 'primer grip' region is thought to be involved in the positioning of the primer terminus for accommodating the incoming nucleotide. The RH domain stabilizes the association of RT with primer-template (By similarity).</text>
</comment>
<comment type="similarity">
    <text evidence="3">Belongs to the caulimoviridae enzymatic polyprotein family.</text>
</comment>